<proteinExistence type="inferred from homology"/>
<organism>
    <name type="scientific">Blochmanniella pennsylvanica (strain BPEN)</name>
    <dbReference type="NCBI Taxonomy" id="291272"/>
    <lineage>
        <taxon>Bacteria</taxon>
        <taxon>Pseudomonadati</taxon>
        <taxon>Pseudomonadota</taxon>
        <taxon>Gammaproteobacteria</taxon>
        <taxon>Enterobacterales</taxon>
        <taxon>Enterobacteriaceae</taxon>
        <taxon>ant endosymbionts</taxon>
        <taxon>Candidatus Blochmanniella</taxon>
    </lineage>
</organism>
<accession>Q493K3</accession>
<protein>
    <recommendedName>
        <fullName evidence="1">Large ribosomal subunit protein uL22</fullName>
    </recommendedName>
    <alternativeName>
        <fullName evidence="2">50S ribosomal protein L22</fullName>
    </alternativeName>
</protein>
<feature type="chain" id="PRO_0000243125" description="Large ribosomal subunit protein uL22">
    <location>
        <begin position="1"/>
        <end position="109"/>
    </location>
</feature>
<comment type="function">
    <text evidence="1">This protein binds specifically to 23S rRNA; its binding is stimulated by other ribosomal proteins, e.g. L4, L17, and L20. It is important during the early stages of 50S assembly. It makes multiple contacts with different domains of the 23S rRNA in the assembled 50S subunit and ribosome (By similarity).</text>
</comment>
<comment type="function">
    <text evidence="1">The globular domain of the protein is located near the polypeptide exit tunnel on the outside of the subunit, while an extended beta-hairpin is found that lines the wall of the exit tunnel in the center of the 70S ribosome.</text>
</comment>
<comment type="subunit">
    <text evidence="1">Part of the 50S ribosomal subunit.</text>
</comment>
<comment type="similarity">
    <text evidence="1">Belongs to the universal ribosomal protein uL22 family.</text>
</comment>
<sequence length="109" mass="12362">MRTISRCRYIRSSAQKLRLVVNTIRGKKVSQALDILKYTNKKSAELVKKTLESAIANAEHNDNSDINNLKIIKIFVDSGPIIKRIMPRAKGRSDKIMKRTSHLTIVVSN</sequence>
<gene>
    <name evidence="1" type="primary">rplV</name>
    <name type="ordered locus">BPEN_203</name>
</gene>
<reference key="1">
    <citation type="journal article" date="2005" name="Genome Res.">
        <title>Genome sequence of Blochmannia pennsylvanicus indicates parallel evolutionary trends among bacterial mutualists of insects.</title>
        <authorList>
            <person name="Degnan P.H."/>
            <person name="Lazarus A.B."/>
            <person name="Wernegreen J.J."/>
        </authorList>
    </citation>
    <scope>NUCLEOTIDE SEQUENCE [LARGE SCALE GENOMIC DNA]</scope>
    <source>
        <strain>BPEN</strain>
    </source>
</reference>
<dbReference type="EMBL" id="CP000016">
    <property type="protein sequence ID" value="AAZ40837.1"/>
    <property type="molecule type" value="Genomic_DNA"/>
</dbReference>
<dbReference type="RefSeq" id="WP_011282744.1">
    <property type="nucleotide sequence ID" value="NC_007292.1"/>
</dbReference>
<dbReference type="SMR" id="Q493K3"/>
<dbReference type="STRING" id="291272.BPEN_203"/>
<dbReference type="KEGG" id="bpn:BPEN_203"/>
<dbReference type="eggNOG" id="COG0091">
    <property type="taxonomic scope" value="Bacteria"/>
</dbReference>
<dbReference type="HOGENOM" id="CLU_083987_3_3_6"/>
<dbReference type="OrthoDB" id="9805969at2"/>
<dbReference type="Proteomes" id="UP000007794">
    <property type="component" value="Chromosome"/>
</dbReference>
<dbReference type="GO" id="GO:0022625">
    <property type="term" value="C:cytosolic large ribosomal subunit"/>
    <property type="evidence" value="ECO:0007669"/>
    <property type="project" value="TreeGrafter"/>
</dbReference>
<dbReference type="GO" id="GO:0019843">
    <property type="term" value="F:rRNA binding"/>
    <property type="evidence" value="ECO:0007669"/>
    <property type="project" value="UniProtKB-UniRule"/>
</dbReference>
<dbReference type="GO" id="GO:0003735">
    <property type="term" value="F:structural constituent of ribosome"/>
    <property type="evidence" value="ECO:0007669"/>
    <property type="project" value="InterPro"/>
</dbReference>
<dbReference type="GO" id="GO:0006412">
    <property type="term" value="P:translation"/>
    <property type="evidence" value="ECO:0007669"/>
    <property type="project" value="UniProtKB-UniRule"/>
</dbReference>
<dbReference type="CDD" id="cd00336">
    <property type="entry name" value="Ribosomal_L22"/>
    <property type="match status" value="1"/>
</dbReference>
<dbReference type="FunFam" id="3.90.470.10:FF:000001">
    <property type="entry name" value="50S ribosomal protein L22"/>
    <property type="match status" value="1"/>
</dbReference>
<dbReference type="Gene3D" id="3.90.470.10">
    <property type="entry name" value="Ribosomal protein L22/L17"/>
    <property type="match status" value="1"/>
</dbReference>
<dbReference type="HAMAP" id="MF_01331_B">
    <property type="entry name" value="Ribosomal_uL22_B"/>
    <property type="match status" value="1"/>
</dbReference>
<dbReference type="InterPro" id="IPR001063">
    <property type="entry name" value="Ribosomal_uL22"/>
</dbReference>
<dbReference type="InterPro" id="IPR005727">
    <property type="entry name" value="Ribosomal_uL22_bac/chlpt-type"/>
</dbReference>
<dbReference type="InterPro" id="IPR047867">
    <property type="entry name" value="Ribosomal_uL22_bac/org-type"/>
</dbReference>
<dbReference type="InterPro" id="IPR018260">
    <property type="entry name" value="Ribosomal_uL22_CS"/>
</dbReference>
<dbReference type="InterPro" id="IPR036394">
    <property type="entry name" value="Ribosomal_uL22_sf"/>
</dbReference>
<dbReference type="NCBIfam" id="TIGR01044">
    <property type="entry name" value="rplV_bact"/>
    <property type="match status" value="1"/>
</dbReference>
<dbReference type="PANTHER" id="PTHR13501">
    <property type="entry name" value="CHLOROPLAST 50S RIBOSOMAL PROTEIN L22-RELATED"/>
    <property type="match status" value="1"/>
</dbReference>
<dbReference type="PANTHER" id="PTHR13501:SF8">
    <property type="entry name" value="LARGE RIBOSOMAL SUBUNIT PROTEIN UL22M"/>
    <property type="match status" value="1"/>
</dbReference>
<dbReference type="Pfam" id="PF00237">
    <property type="entry name" value="Ribosomal_L22"/>
    <property type="match status" value="1"/>
</dbReference>
<dbReference type="SUPFAM" id="SSF54843">
    <property type="entry name" value="Ribosomal protein L22"/>
    <property type="match status" value="1"/>
</dbReference>
<dbReference type="PROSITE" id="PS00464">
    <property type="entry name" value="RIBOSOMAL_L22"/>
    <property type="match status" value="1"/>
</dbReference>
<evidence type="ECO:0000255" key="1">
    <source>
        <dbReference type="HAMAP-Rule" id="MF_01331"/>
    </source>
</evidence>
<evidence type="ECO:0000305" key="2"/>
<keyword id="KW-1185">Reference proteome</keyword>
<keyword id="KW-0687">Ribonucleoprotein</keyword>
<keyword id="KW-0689">Ribosomal protein</keyword>
<keyword id="KW-0694">RNA-binding</keyword>
<keyword id="KW-0699">rRNA-binding</keyword>
<name>RL22_BLOPB</name>